<reference key="1">
    <citation type="journal article" date="2002" name="Proc. Natl. Acad. Sci. U.S.A.">
        <title>Genome sequence and comparative microarray analysis of serotype M18 group A Streptococcus strains associated with acute rheumatic fever outbreaks.</title>
        <authorList>
            <person name="Smoot J.C."/>
            <person name="Barbian K.D."/>
            <person name="Van Gompel J.J."/>
            <person name="Smoot L.M."/>
            <person name="Chaussee M.S."/>
            <person name="Sylva G.L."/>
            <person name="Sturdevant D.E."/>
            <person name="Ricklefs S.M."/>
            <person name="Porcella S.F."/>
            <person name="Parkins L.D."/>
            <person name="Beres S.B."/>
            <person name="Campbell D.S."/>
            <person name="Smith T.M."/>
            <person name="Zhang Q."/>
            <person name="Kapur V."/>
            <person name="Daly J.A."/>
            <person name="Veasy L.G."/>
            <person name="Musser J.M."/>
        </authorList>
    </citation>
    <scope>NUCLEOTIDE SEQUENCE [LARGE SCALE GENOMIC DNA]</scope>
    <source>
        <strain>MGAS8232</strain>
    </source>
</reference>
<comment type="function">
    <text evidence="1">One of the primary rRNA binding proteins, it binds directly to 16S rRNA central domain where it helps coordinate assembly of the platform of the 30S subunit.</text>
</comment>
<comment type="subunit">
    <text evidence="1">Part of the 30S ribosomal subunit. Contacts proteins S5 and S12.</text>
</comment>
<comment type="similarity">
    <text evidence="1">Belongs to the universal ribosomal protein uS8 family.</text>
</comment>
<dbReference type="EMBL" id="AE009949">
    <property type="protein sequence ID" value="AAL96890.1"/>
    <property type="molecule type" value="Genomic_DNA"/>
</dbReference>
<dbReference type="RefSeq" id="WP_002987748.1">
    <property type="nucleotide sequence ID" value="NC_003485.1"/>
</dbReference>
<dbReference type="SMR" id="P66636"/>
<dbReference type="GeneID" id="69900040"/>
<dbReference type="KEGG" id="spm:spyM18_0066"/>
<dbReference type="HOGENOM" id="CLU_098428_0_2_9"/>
<dbReference type="GO" id="GO:1990904">
    <property type="term" value="C:ribonucleoprotein complex"/>
    <property type="evidence" value="ECO:0007669"/>
    <property type="project" value="UniProtKB-KW"/>
</dbReference>
<dbReference type="GO" id="GO:0005840">
    <property type="term" value="C:ribosome"/>
    <property type="evidence" value="ECO:0007669"/>
    <property type="project" value="UniProtKB-KW"/>
</dbReference>
<dbReference type="GO" id="GO:0019843">
    <property type="term" value="F:rRNA binding"/>
    <property type="evidence" value="ECO:0007669"/>
    <property type="project" value="UniProtKB-UniRule"/>
</dbReference>
<dbReference type="GO" id="GO:0003735">
    <property type="term" value="F:structural constituent of ribosome"/>
    <property type="evidence" value="ECO:0007669"/>
    <property type="project" value="InterPro"/>
</dbReference>
<dbReference type="GO" id="GO:0006412">
    <property type="term" value="P:translation"/>
    <property type="evidence" value="ECO:0007669"/>
    <property type="project" value="UniProtKB-UniRule"/>
</dbReference>
<dbReference type="FunFam" id="3.30.1370.30:FF:000002">
    <property type="entry name" value="30S ribosomal protein S8"/>
    <property type="match status" value="1"/>
</dbReference>
<dbReference type="FunFam" id="3.30.1490.10:FF:000001">
    <property type="entry name" value="30S ribosomal protein S8"/>
    <property type="match status" value="1"/>
</dbReference>
<dbReference type="Gene3D" id="3.30.1370.30">
    <property type="match status" value="1"/>
</dbReference>
<dbReference type="Gene3D" id="3.30.1490.10">
    <property type="match status" value="1"/>
</dbReference>
<dbReference type="HAMAP" id="MF_01302_B">
    <property type="entry name" value="Ribosomal_uS8_B"/>
    <property type="match status" value="1"/>
</dbReference>
<dbReference type="InterPro" id="IPR000630">
    <property type="entry name" value="Ribosomal_uS8"/>
</dbReference>
<dbReference type="InterPro" id="IPR047863">
    <property type="entry name" value="Ribosomal_uS8_CS"/>
</dbReference>
<dbReference type="InterPro" id="IPR035987">
    <property type="entry name" value="Ribosomal_uS8_sf"/>
</dbReference>
<dbReference type="NCBIfam" id="NF001109">
    <property type="entry name" value="PRK00136.1"/>
    <property type="match status" value="1"/>
</dbReference>
<dbReference type="PANTHER" id="PTHR11758">
    <property type="entry name" value="40S RIBOSOMAL PROTEIN S15A"/>
    <property type="match status" value="1"/>
</dbReference>
<dbReference type="Pfam" id="PF00410">
    <property type="entry name" value="Ribosomal_S8"/>
    <property type="match status" value="1"/>
</dbReference>
<dbReference type="SUPFAM" id="SSF56047">
    <property type="entry name" value="Ribosomal protein S8"/>
    <property type="match status" value="1"/>
</dbReference>
<dbReference type="PROSITE" id="PS00053">
    <property type="entry name" value="RIBOSOMAL_S8"/>
    <property type="match status" value="1"/>
</dbReference>
<evidence type="ECO:0000255" key="1">
    <source>
        <dbReference type="HAMAP-Rule" id="MF_01302"/>
    </source>
</evidence>
<evidence type="ECO:0000305" key="2"/>
<organism>
    <name type="scientific">Streptococcus pyogenes serotype M18 (strain MGAS8232)</name>
    <dbReference type="NCBI Taxonomy" id="186103"/>
    <lineage>
        <taxon>Bacteria</taxon>
        <taxon>Bacillati</taxon>
        <taxon>Bacillota</taxon>
        <taxon>Bacilli</taxon>
        <taxon>Lactobacillales</taxon>
        <taxon>Streptococcaceae</taxon>
        <taxon>Streptococcus</taxon>
    </lineage>
</organism>
<proteinExistence type="inferred from homology"/>
<sequence>MVMTDPIADFLTRIRNANQVKHEVLEVPASNIKKGIAEILKREGFVKNVEVIEDDKQGIIRVFLKYGKNGERVITNLKRISKPGLRVYAKRDDMPKVLNGLGIAIISTSEGLLTDKEARQKNVGGEVIAYVW</sequence>
<keyword id="KW-0687">Ribonucleoprotein</keyword>
<keyword id="KW-0689">Ribosomal protein</keyword>
<keyword id="KW-0694">RNA-binding</keyword>
<keyword id="KW-0699">rRNA-binding</keyword>
<feature type="chain" id="PRO_0000126501" description="Small ribosomal subunit protein uS8">
    <location>
        <begin position="1"/>
        <end position="132"/>
    </location>
</feature>
<protein>
    <recommendedName>
        <fullName evidence="1">Small ribosomal subunit protein uS8</fullName>
    </recommendedName>
    <alternativeName>
        <fullName evidence="2">30S ribosomal protein S8</fullName>
    </alternativeName>
</protein>
<name>RS8_STRP8</name>
<accession>P66636</accession>
<accession>Q9A1W0</accession>
<gene>
    <name evidence="1" type="primary">rpsH</name>
    <name type="ordered locus">spyM18_0066</name>
</gene>